<sequence length="384" mass="43222">MDGETAGEKGSLVPQPGALGAPALGGAPAPGVRREPKKYAVTDDYQLSKQVLGLGVNGKVLECYHRRSGQKCALKLLYDSPKARQEVDHHWQASGGPHIVRILDVYENMHHGKRCLLIVMECMEGGELFSRIQERGDQAFTEREAAEIMRDIGTAIQFLHSQNIAHRDVKPENLLYTSKEKDAVLKLTDFGFAKETTQNALQTPCYTPYYVAPEVLGPEKYDKSCDMWSLGVIMYILLCGFPPFYSNTGQAISPGMKRRIRLGQYGFPKPEWADVSEDAKQLIRLLLKTDPTERLTIMQFMNHPWINQSMEVPQTPLHTARVLEEDKDHWDDVKEEMTSALATMRVDYDQVKIKDLKTSNNRLLNKRRKKQGGSSSASPGCNNQ</sequence>
<dbReference type="EC" id="2.7.11.1"/>
<dbReference type="EMBL" id="BC081974">
    <property type="protein sequence ID" value="AAH81974.1"/>
    <property type="molecule type" value="mRNA"/>
</dbReference>
<dbReference type="RefSeq" id="NP_001012127.1">
    <property type="nucleotide sequence ID" value="NM_001012127.1"/>
</dbReference>
<dbReference type="RefSeq" id="XP_006243838.1">
    <property type="nucleotide sequence ID" value="XM_006243776.3"/>
</dbReference>
<dbReference type="RefSeq" id="XP_008764753.1">
    <property type="nucleotide sequence ID" value="XM_008766531.4"/>
</dbReference>
<dbReference type="SMR" id="Q66H84"/>
<dbReference type="FunCoup" id="Q66H84">
    <property type="interactions" value="2110"/>
</dbReference>
<dbReference type="STRING" id="10116.ENSRNOP00000020065"/>
<dbReference type="iPTMnet" id="Q66H84"/>
<dbReference type="PhosphoSitePlus" id="Q66H84"/>
<dbReference type="PaxDb" id="10116-ENSRNOP00000020065"/>
<dbReference type="Ensembl" id="ENSRNOT00000020065.6">
    <property type="protein sequence ID" value="ENSRNOP00000020065.3"/>
    <property type="gene ID" value="ENSRNOG00000014832.7"/>
</dbReference>
<dbReference type="GeneID" id="315994"/>
<dbReference type="KEGG" id="rno:315994"/>
<dbReference type="UCSC" id="RGD:1304980">
    <property type="organism name" value="rat"/>
</dbReference>
<dbReference type="AGR" id="RGD:1304980"/>
<dbReference type="CTD" id="7867"/>
<dbReference type="RGD" id="1304980">
    <property type="gene designation" value="Mapkapk3"/>
</dbReference>
<dbReference type="eggNOG" id="KOG0604">
    <property type="taxonomic scope" value="Eukaryota"/>
</dbReference>
<dbReference type="GeneTree" id="ENSGT00940000154089"/>
<dbReference type="HOGENOM" id="CLU_000288_63_0_1"/>
<dbReference type="InParanoid" id="Q66H84"/>
<dbReference type="OMA" id="PSPEWDC"/>
<dbReference type="OrthoDB" id="40902at2759"/>
<dbReference type="PhylomeDB" id="Q66H84"/>
<dbReference type="TreeFam" id="TF312891"/>
<dbReference type="Reactome" id="R-RNO-171007">
    <property type="pathway name" value="p38MAPK events"/>
</dbReference>
<dbReference type="Reactome" id="R-RNO-2559580">
    <property type="pathway name" value="Oxidative Stress Induced Senescence"/>
</dbReference>
<dbReference type="Reactome" id="R-RNO-4420097">
    <property type="pathway name" value="VEGFA-VEGFR2 Pathway"/>
</dbReference>
<dbReference type="Reactome" id="R-RNO-450302">
    <property type="pathway name" value="activated TAK1 mediates p38 MAPK activation"/>
</dbReference>
<dbReference type="PRO" id="PR:Q66H84"/>
<dbReference type="Proteomes" id="UP000002494">
    <property type="component" value="Chromosome 8"/>
</dbReference>
<dbReference type="Bgee" id="ENSRNOG00000014832">
    <property type="expression patterns" value="Expressed in ovary and 20 other cell types or tissues"/>
</dbReference>
<dbReference type="GO" id="GO:0005737">
    <property type="term" value="C:cytoplasm"/>
    <property type="evidence" value="ECO:0000318"/>
    <property type="project" value="GO_Central"/>
</dbReference>
<dbReference type="GO" id="GO:0005654">
    <property type="term" value="C:nucleoplasm"/>
    <property type="evidence" value="ECO:0007669"/>
    <property type="project" value="Ensembl"/>
</dbReference>
<dbReference type="GO" id="GO:0005634">
    <property type="term" value="C:nucleus"/>
    <property type="evidence" value="ECO:0000318"/>
    <property type="project" value="GO_Central"/>
</dbReference>
<dbReference type="GO" id="GO:0005524">
    <property type="term" value="F:ATP binding"/>
    <property type="evidence" value="ECO:0007669"/>
    <property type="project" value="UniProtKB-KW"/>
</dbReference>
<dbReference type="GO" id="GO:0009931">
    <property type="term" value="F:calcium-dependent protein serine/threonine kinase activity"/>
    <property type="evidence" value="ECO:0000318"/>
    <property type="project" value="GO_Central"/>
</dbReference>
<dbReference type="GO" id="GO:0004683">
    <property type="term" value="F:calcium/calmodulin-dependent protein kinase activity"/>
    <property type="evidence" value="ECO:0000318"/>
    <property type="project" value="GO_Central"/>
</dbReference>
<dbReference type="GO" id="GO:0005516">
    <property type="term" value="F:calmodulin binding"/>
    <property type="evidence" value="ECO:0000318"/>
    <property type="project" value="GO_Central"/>
</dbReference>
<dbReference type="GO" id="GO:0051019">
    <property type="term" value="F:mitogen-activated protein kinase binding"/>
    <property type="evidence" value="ECO:0000318"/>
    <property type="project" value="GO_Central"/>
</dbReference>
<dbReference type="GO" id="GO:0106310">
    <property type="term" value="F:protein serine kinase activity"/>
    <property type="evidence" value="ECO:0007669"/>
    <property type="project" value="RHEA"/>
</dbReference>
<dbReference type="GO" id="GO:0004674">
    <property type="term" value="F:protein serine/threonine kinase activity"/>
    <property type="evidence" value="ECO:0000250"/>
    <property type="project" value="UniProtKB"/>
</dbReference>
<dbReference type="GO" id="GO:0035556">
    <property type="term" value="P:intracellular signal transduction"/>
    <property type="evidence" value="ECO:0000318"/>
    <property type="project" value="GO_Central"/>
</dbReference>
<dbReference type="GO" id="GO:0044351">
    <property type="term" value="P:macropinocytosis"/>
    <property type="evidence" value="ECO:0000250"/>
    <property type="project" value="UniProtKB"/>
</dbReference>
<dbReference type="GO" id="GO:0034097">
    <property type="term" value="P:response to cytokine"/>
    <property type="evidence" value="ECO:0000250"/>
    <property type="project" value="UniProtKB"/>
</dbReference>
<dbReference type="GO" id="GO:0032496">
    <property type="term" value="P:response to lipopolysaccharide"/>
    <property type="evidence" value="ECO:0000250"/>
    <property type="project" value="UniProtKB"/>
</dbReference>
<dbReference type="GO" id="GO:0002224">
    <property type="term" value="P:toll-like receptor signaling pathway"/>
    <property type="evidence" value="ECO:0000250"/>
    <property type="project" value="UniProtKB"/>
</dbReference>
<dbReference type="CDD" id="cd14172">
    <property type="entry name" value="STKc_MAPKAPK3"/>
    <property type="match status" value="1"/>
</dbReference>
<dbReference type="FunFam" id="1.10.510.10:FF:000094">
    <property type="entry name" value="MAP kinase-activated protein kinase 2"/>
    <property type="match status" value="1"/>
</dbReference>
<dbReference type="FunFam" id="3.30.200.20:FF:000156">
    <property type="entry name" value="MAP kinase-activated protein kinase 3"/>
    <property type="match status" value="1"/>
</dbReference>
<dbReference type="FunFam" id="4.10.1170.10:FF:000001">
    <property type="entry name" value="MAP kinase-activated protein kinase 3"/>
    <property type="match status" value="1"/>
</dbReference>
<dbReference type="Gene3D" id="4.10.1170.10">
    <property type="entry name" value="MAP kinase activated protein kinase 2"/>
    <property type="match status" value="1"/>
</dbReference>
<dbReference type="Gene3D" id="3.30.200.20">
    <property type="entry name" value="Phosphorylase Kinase, domain 1"/>
    <property type="match status" value="1"/>
</dbReference>
<dbReference type="Gene3D" id="1.10.510.10">
    <property type="entry name" value="Transferase(Phosphotransferase) domain 1"/>
    <property type="match status" value="1"/>
</dbReference>
<dbReference type="InterPro" id="IPR011009">
    <property type="entry name" value="Kinase-like_dom_sf"/>
</dbReference>
<dbReference type="InterPro" id="IPR027442">
    <property type="entry name" value="MAPKAPK_C"/>
</dbReference>
<dbReference type="InterPro" id="IPR000719">
    <property type="entry name" value="Prot_kinase_dom"/>
</dbReference>
<dbReference type="InterPro" id="IPR017441">
    <property type="entry name" value="Protein_kinase_ATP_BS"/>
</dbReference>
<dbReference type="InterPro" id="IPR008271">
    <property type="entry name" value="Ser/Thr_kinase_AS"/>
</dbReference>
<dbReference type="PANTHER" id="PTHR24347">
    <property type="entry name" value="SERINE/THREONINE-PROTEIN KINASE"/>
    <property type="match status" value="1"/>
</dbReference>
<dbReference type="Pfam" id="PF00069">
    <property type="entry name" value="Pkinase"/>
    <property type="match status" value="1"/>
</dbReference>
<dbReference type="SMART" id="SM00220">
    <property type="entry name" value="S_TKc"/>
    <property type="match status" value="1"/>
</dbReference>
<dbReference type="SUPFAM" id="SSF56112">
    <property type="entry name" value="Protein kinase-like (PK-like)"/>
    <property type="match status" value="1"/>
</dbReference>
<dbReference type="PROSITE" id="PS00107">
    <property type="entry name" value="PROTEIN_KINASE_ATP"/>
    <property type="match status" value="1"/>
</dbReference>
<dbReference type="PROSITE" id="PS50011">
    <property type="entry name" value="PROTEIN_KINASE_DOM"/>
    <property type="match status" value="1"/>
</dbReference>
<dbReference type="PROSITE" id="PS00108">
    <property type="entry name" value="PROTEIN_KINASE_ST"/>
    <property type="match status" value="1"/>
</dbReference>
<keyword id="KW-0007">Acetylation</keyword>
<keyword id="KW-0067">ATP-binding</keyword>
<keyword id="KW-0963">Cytoplasm</keyword>
<keyword id="KW-0418">Kinase</keyword>
<keyword id="KW-0547">Nucleotide-binding</keyword>
<keyword id="KW-0539">Nucleus</keyword>
<keyword id="KW-0597">Phosphoprotein</keyword>
<keyword id="KW-1185">Reference proteome</keyword>
<keyword id="KW-0723">Serine/threonine-protein kinase</keyword>
<keyword id="KW-0808">Transferase</keyword>
<accession>Q66H84</accession>
<gene>
    <name type="primary">Mapkapk3</name>
</gene>
<comment type="function">
    <text evidence="1">Stress-activated serine/threonine-protein kinase involved in cytokines production, endocytosis, cell migration, chromatin remodeling and transcriptional regulation. Following stress, it is phosphorylated and activated by MAP kinase p38-alpha/MAPK14, leading to phosphorylation of substrates. Phosphorylates serine in the peptide sequence, Hyd-X-R-X(2)-S, where Hyd is a large hydrophobic residue. MAPKAPK2 and MAPKAPK3, share the same function and substrate specificity, but MAPKAPK3 kinase activity and level in protein expression are lower compared to MAPKAPK2. Phosphorylates HSP27/HSPB1, KRT18, KRT20, RCSD1, RPS6KA3, TAB3 and TTP/ZFP36. Mediates phosphorylation of HSP27/HSPB1 in response to stress, leading to dissociate HSP27/HSPB1 from large small heat-shock protein (sHsps) oligomers and impair their chaperone activities and ability to protect against oxidative stress effectively. Involved in inflammatory response by regulating tumor necrosis factor (TNF) and IL6 production post-transcriptionally: acts by phosphorylating AU-rich elements (AREs)-binding proteins, such as TTP/ZFP36, leading to regulate the stability and translation of TNF and IL6 mRNAs. Phosphorylation of TTP/ZFP36, a major post-transcriptional regulator of TNF, promotes its binding to 14-3-3 proteins and reduces its ARE mRNA affinity leading to inhibition of dependent degradation of ARE-containing transcript. Involved in toll-like receptor signaling pathway (TLR) in dendritic cells: required for acute TLR-induced macropinocytosis by phosphorylating and activating RPS6KA3. Also acts as a modulator of Polycomb-mediated repression (By similarity).</text>
</comment>
<comment type="catalytic activity">
    <reaction>
        <text>L-seryl-[protein] + ATP = O-phospho-L-seryl-[protein] + ADP + H(+)</text>
        <dbReference type="Rhea" id="RHEA:17989"/>
        <dbReference type="Rhea" id="RHEA-COMP:9863"/>
        <dbReference type="Rhea" id="RHEA-COMP:11604"/>
        <dbReference type="ChEBI" id="CHEBI:15378"/>
        <dbReference type="ChEBI" id="CHEBI:29999"/>
        <dbReference type="ChEBI" id="CHEBI:30616"/>
        <dbReference type="ChEBI" id="CHEBI:83421"/>
        <dbReference type="ChEBI" id="CHEBI:456216"/>
        <dbReference type="EC" id="2.7.11.1"/>
    </reaction>
</comment>
<comment type="catalytic activity">
    <reaction>
        <text>L-threonyl-[protein] + ATP = O-phospho-L-threonyl-[protein] + ADP + H(+)</text>
        <dbReference type="Rhea" id="RHEA:46608"/>
        <dbReference type="Rhea" id="RHEA-COMP:11060"/>
        <dbReference type="Rhea" id="RHEA-COMP:11605"/>
        <dbReference type="ChEBI" id="CHEBI:15378"/>
        <dbReference type="ChEBI" id="CHEBI:30013"/>
        <dbReference type="ChEBI" id="CHEBI:30616"/>
        <dbReference type="ChEBI" id="CHEBI:61977"/>
        <dbReference type="ChEBI" id="CHEBI:456216"/>
        <dbReference type="EC" id="2.7.11.1"/>
    </reaction>
</comment>
<comment type="activity regulation">
    <text evidence="1">Activated following phosphorylation by p38-alpha/MAPK14 following various stresses. Inhibited by ligand 5B (2'-[2-(1,3-benzodioxol-5-yl)pyrimidin-4-yl]-5',6'-dihydrospiro[piperidine-4,7'-pyrrolo[3,2-c]pyridin]- 4'(1'h)-one) and ligand P4O (2-[2-(2-fluorophenyl)pyridin-4-yl]-1,5,6,7-tetrahydro- 4h-pyrrolo[3,2-c]pyridin-4-one), 2 ATP-competitive inhibitors (By similarity).</text>
</comment>
<comment type="subunit">
    <text evidence="1">Heterodimer with p38-alpha/MAPK14. The heterodimer with p38-alpha/MAPK14 forms a stable complex: molecules are positioned 'face to face' so that the ATP-binding sites of both kinases are at the heterodimer interface. Interacts with TCF3 and with polycomb proteins, such as PCH2 and BMI1/PCGF4 (By similarity).</text>
</comment>
<comment type="subcellular location">
    <subcellularLocation>
        <location evidence="1">Nucleus</location>
    </subcellularLocation>
    <subcellularLocation>
        <location evidence="1">Cytoplasm</location>
    </subcellularLocation>
    <text evidence="1">Predominantly located in the nucleus, when activated it translocates to the cytoplasm.</text>
</comment>
<comment type="PTM">
    <text evidence="1">Phosphorylated and activated by MAPK1/ERK2 and MAPK3/ERK1. Phosphorylated and activated by MAP kinase p38-alpha/MAPK14 at Thr-203, Ser-253 and Thr-315.</text>
</comment>
<comment type="similarity">
    <text evidence="7">Belongs to the protein kinase superfamily. CAMK Ser/Thr protein kinase family.</text>
</comment>
<reference key="1">
    <citation type="journal article" date="2004" name="Genome Res.">
        <title>The status, quality, and expansion of the NIH full-length cDNA project: the Mammalian Gene Collection (MGC).</title>
        <authorList>
            <consortium name="The MGC Project Team"/>
        </authorList>
    </citation>
    <scope>NUCLEOTIDE SEQUENCE [LARGE SCALE MRNA]</scope>
    <source>
        <tissue>Kidney</tissue>
    </source>
</reference>
<evidence type="ECO:0000250" key="1"/>
<evidence type="ECO:0000250" key="2">
    <source>
        <dbReference type="UniProtKB" id="Q16644"/>
    </source>
</evidence>
<evidence type="ECO:0000250" key="3">
    <source>
        <dbReference type="UniProtKB" id="Q3UMW7"/>
    </source>
</evidence>
<evidence type="ECO:0000255" key="4">
    <source>
        <dbReference type="PROSITE-ProRule" id="PRU00159"/>
    </source>
</evidence>
<evidence type="ECO:0000255" key="5">
    <source>
        <dbReference type="PROSITE-ProRule" id="PRU10027"/>
    </source>
</evidence>
<evidence type="ECO:0000256" key="6">
    <source>
        <dbReference type="SAM" id="MobiDB-lite"/>
    </source>
</evidence>
<evidence type="ECO:0000305" key="7"/>
<name>MAPK3_RAT</name>
<feature type="chain" id="PRO_0000086295" description="MAP kinase-activated protein kinase 3">
    <location>
        <begin position="1"/>
        <end position="384"/>
    </location>
</feature>
<feature type="domain" description="Protein kinase" evidence="4">
    <location>
        <begin position="46"/>
        <end position="306"/>
    </location>
</feature>
<feature type="region of interest" description="Disordered" evidence="6">
    <location>
        <begin position="1"/>
        <end position="33"/>
    </location>
</feature>
<feature type="region of interest" description="Autoinhibitory helix" evidence="1">
    <location>
        <begin position="309"/>
        <end position="345"/>
    </location>
</feature>
<feature type="region of interest" description="p38 MAPK-binding site" evidence="1">
    <location>
        <begin position="347"/>
        <end position="371"/>
    </location>
</feature>
<feature type="region of interest" description="Disordered" evidence="6">
    <location>
        <begin position="359"/>
        <end position="384"/>
    </location>
</feature>
<feature type="short sequence motif" description="Nuclear export signal (NES)" evidence="1">
    <location>
        <begin position="337"/>
        <end position="346"/>
    </location>
</feature>
<feature type="short sequence motif" description="Bipartite nuclear localization signal 1" evidence="1">
    <location>
        <begin position="352"/>
        <end position="355"/>
    </location>
</feature>
<feature type="short sequence motif" description="Bipartite nuclear localization signal 2" evidence="1">
    <location>
        <begin position="366"/>
        <end position="370"/>
    </location>
</feature>
<feature type="compositionally biased region" description="Low complexity" evidence="6">
    <location>
        <begin position="14"/>
        <end position="31"/>
    </location>
</feature>
<feature type="compositionally biased region" description="Polar residues" evidence="6">
    <location>
        <begin position="372"/>
        <end position="384"/>
    </location>
</feature>
<feature type="active site" description="Proton acceptor" evidence="4 5">
    <location>
        <position position="168"/>
    </location>
</feature>
<feature type="binding site" evidence="4">
    <location>
        <begin position="52"/>
        <end position="60"/>
    </location>
    <ligand>
        <name>ATP</name>
        <dbReference type="ChEBI" id="CHEBI:30616"/>
    </ligand>
</feature>
<feature type="binding site" evidence="4">
    <location>
        <position position="75"/>
    </location>
    <ligand>
        <name>ATP</name>
        <dbReference type="ChEBI" id="CHEBI:30616"/>
    </ligand>
</feature>
<feature type="modified residue" description="N-acetylmethionine" evidence="2">
    <location>
        <position position="1"/>
    </location>
</feature>
<feature type="modified residue" description="Phosphothreonine; by MAPK14" evidence="3">
    <location>
        <position position="203"/>
    </location>
</feature>
<feature type="modified residue" description="Phosphoserine; by MAPK14" evidence="1">
    <location>
        <position position="253"/>
    </location>
</feature>
<feature type="modified residue" description="Phosphoserine; by autocatalysis" evidence="1">
    <location>
        <position position="309"/>
    </location>
</feature>
<feature type="modified residue" description="Phosphothreonine; by MAPK14" evidence="1">
    <location>
        <position position="315"/>
    </location>
</feature>
<proteinExistence type="evidence at transcript level"/>
<protein>
    <recommendedName>
        <fullName>MAP kinase-activated protein kinase 3</fullName>
        <shortName>MAPK-activated protein kinase 3</shortName>
        <shortName>MAPKAP kinase 3</shortName>
        <shortName>MAPKAP-K3</shortName>
        <shortName>MAPKAPK-3</shortName>
        <shortName>MK-3</shortName>
        <ecNumber>2.7.11.1</ecNumber>
    </recommendedName>
</protein>
<organism>
    <name type="scientific">Rattus norvegicus</name>
    <name type="common">Rat</name>
    <dbReference type="NCBI Taxonomy" id="10116"/>
    <lineage>
        <taxon>Eukaryota</taxon>
        <taxon>Metazoa</taxon>
        <taxon>Chordata</taxon>
        <taxon>Craniata</taxon>
        <taxon>Vertebrata</taxon>
        <taxon>Euteleostomi</taxon>
        <taxon>Mammalia</taxon>
        <taxon>Eutheria</taxon>
        <taxon>Euarchontoglires</taxon>
        <taxon>Glires</taxon>
        <taxon>Rodentia</taxon>
        <taxon>Myomorpha</taxon>
        <taxon>Muroidea</taxon>
        <taxon>Muridae</taxon>
        <taxon>Murinae</taxon>
        <taxon>Rattus</taxon>
    </lineage>
</organism>